<dbReference type="EC" id="2.1.1.228" evidence="1"/>
<dbReference type="EMBL" id="CP000909">
    <property type="protein sequence ID" value="ABY33599.1"/>
    <property type="molecule type" value="Genomic_DNA"/>
</dbReference>
<dbReference type="RefSeq" id="WP_012256255.1">
    <property type="nucleotide sequence ID" value="NC_010175.1"/>
</dbReference>
<dbReference type="RefSeq" id="YP_001633988.1">
    <property type="nucleotide sequence ID" value="NC_010175.1"/>
</dbReference>
<dbReference type="SMR" id="A9WDJ3"/>
<dbReference type="FunCoup" id="A9WDJ3">
    <property type="interactions" value="396"/>
</dbReference>
<dbReference type="STRING" id="324602.Caur_0348"/>
<dbReference type="EnsemblBacteria" id="ABY33599">
    <property type="protein sequence ID" value="ABY33599"/>
    <property type="gene ID" value="Caur_0348"/>
</dbReference>
<dbReference type="KEGG" id="cau:Caur_0348"/>
<dbReference type="PATRIC" id="fig|324602.8.peg.399"/>
<dbReference type="eggNOG" id="COG0336">
    <property type="taxonomic scope" value="Bacteria"/>
</dbReference>
<dbReference type="HOGENOM" id="CLU_047363_0_1_0"/>
<dbReference type="InParanoid" id="A9WDJ3"/>
<dbReference type="Proteomes" id="UP000002008">
    <property type="component" value="Chromosome"/>
</dbReference>
<dbReference type="GO" id="GO:0005829">
    <property type="term" value="C:cytosol"/>
    <property type="evidence" value="ECO:0000318"/>
    <property type="project" value="GO_Central"/>
</dbReference>
<dbReference type="GO" id="GO:0052906">
    <property type="term" value="F:tRNA (guanine(37)-N1)-methyltransferase activity"/>
    <property type="evidence" value="ECO:0000318"/>
    <property type="project" value="GO_Central"/>
</dbReference>
<dbReference type="GO" id="GO:0002939">
    <property type="term" value="P:tRNA N1-guanine methylation"/>
    <property type="evidence" value="ECO:0000318"/>
    <property type="project" value="GO_Central"/>
</dbReference>
<dbReference type="CDD" id="cd18080">
    <property type="entry name" value="TrmD-like"/>
    <property type="match status" value="1"/>
</dbReference>
<dbReference type="FunFam" id="1.10.1270.20:FF:000002">
    <property type="entry name" value="tRNA (guanine-N(1)-)-methyltransferase"/>
    <property type="match status" value="1"/>
</dbReference>
<dbReference type="FunFam" id="3.40.1280.10:FF:000001">
    <property type="entry name" value="tRNA (guanine-N(1)-)-methyltransferase"/>
    <property type="match status" value="1"/>
</dbReference>
<dbReference type="Gene3D" id="3.40.1280.10">
    <property type="match status" value="1"/>
</dbReference>
<dbReference type="Gene3D" id="1.10.1270.20">
    <property type="entry name" value="tRNA(m1g37)methyltransferase, domain 2"/>
    <property type="match status" value="1"/>
</dbReference>
<dbReference type="HAMAP" id="MF_00605">
    <property type="entry name" value="TrmD"/>
    <property type="match status" value="1"/>
</dbReference>
<dbReference type="InterPro" id="IPR029028">
    <property type="entry name" value="Alpha/beta_knot_MTases"/>
</dbReference>
<dbReference type="InterPro" id="IPR023148">
    <property type="entry name" value="tRNA_m1G_MeTrfase_C_sf"/>
</dbReference>
<dbReference type="InterPro" id="IPR002649">
    <property type="entry name" value="tRNA_m1G_MeTrfase_TrmD"/>
</dbReference>
<dbReference type="InterPro" id="IPR029026">
    <property type="entry name" value="tRNA_m1G_MTases_N"/>
</dbReference>
<dbReference type="InterPro" id="IPR016009">
    <property type="entry name" value="tRNA_MeTrfase_TRMD/TRM10"/>
</dbReference>
<dbReference type="NCBIfam" id="NF000648">
    <property type="entry name" value="PRK00026.1"/>
    <property type="match status" value="1"/>
</dbReference>
<dbReference type="NCBIfam" id="TIGR00088">
    <property type="entry name" value="trmD"/>
    <property type="match status" value="1"/>
</dbReference>
<dbReference type="PANTHER" id="PTHR46417">
    <property type="entry name" value="TRNA (GUANINE-N(1)-)-METHYLTRANSFERASE"/>
    <property type="match status" value="1"/>
</dbReference>
<dbReference type="PANTHER" id="PTHR46417:SF1">
    <property type="entry name" value="TRNA (GUANINE-N(1)-)-METHYLTRANSFERASE"/>
    <property type="match status" value="1"/>
</dbReference>
<dbReference type="Pfam" id="PF01746">
    <property type="entry name" value="tRNA_m1G_MT"/>
    <property type="match status" value="1"/>
</dbReference>
<dbReference type="PIRSF" id="PIRSF000386">
    <property type="entry name" value="tRNA_mtase"/>
    <property type="match status" value="1"/>
</dbReference>
<dbReference type="SUPFAM" id="SSF75217">
    <property type="entry name" value="alpha/beta knot"/>
    <property type="match status" value="1"/>
</dbReference>
<gene>
    <name evidence="1" type="primary">trmD</name>
    <name type="ordered locus">Caur_0348</name>
</gene>
<sequence>MRFDILTLFPAMFQGPLTESILKRAQQAGRIEIHLHDIRQWTTDRHRTADDTPYGGGAGMVMKAEPLAAAIRAVRAADERPGVTILLTPDGELLTQQIVRELATLPRLLLVCGHYEGIDERVRETLIDRELSIGDYVLTGGELAAMVVVDAVARLVPGVIDSESIVEESHSDFLLEYPHYTRPAVWEGRAVPPVLLSGHHGEIARWRRAERLRRTLVRRPDLLARAAAAGVLTKADLALLAELGWRPETSNGA</sequence>
<comment type="function">
    <text evidence="1">Specifically methylates guanosine-37 in various tRNAs.</text>
</comment>
<comment type="catalytic activity">
    <reaction evidence="1">
        <text>guanosine(37) in tRNA + S-adenosyl-L-methionine = N(1)-methylguanosine(37) in tRNA + S-adenosyl-L-homocysteine + H(+)</text>
        <dbReference type="Rhea" id="RHEA:36899"/>
        <dbReference type="Rhea" id="RHEA-COMP:10145"/>
        <dbReference type="Rhea" id="RHEA-COMP:10147"/>
        <dbReference type="ChEBI" id="CHEBI:15378"/>
        <dbReference type="ChEBI" id="CHEBI:57856"/>
        <dbReference type="ChEBI" id="CHEBI:59789"/>
        <dbReference type="ChEBI" id="CHEBI:73542"/>
        <dbReference type="ChEBI" id="CHEBI:74269"/>
        <dbReference type="EC" id="2.1.1.228"/>
    </reaction>
</comment>
<comment type="subunit">
    <text evidence="1">Homodimer.</text>
</comment>
<comment type="subcellular location">
    <subcellularLocation>
        <location evidence="1">Cytoplasm</location>
    </subcellularLocation>
</comment>
<comment type="similarity">
    <text evidence="1">Belongs to the RNA methyltransferase TrmD family.</text>
</comment>
<accession>A9WDJ3</accession>
<feature type="chain" id="PRO_1000082509" description="tRNA (guanine-N(1)-)-methyltransferase">
    <location>
        <begin position="1"/>
        <end position="253"/>
    </location>
</feature>
<feature type="binding site" evidence="1">
    <location>
        <position position="113"/>
    </location>
    <ligand>
        <name>S-adenosyl-L-methionine</name>
        <dbReference type="ChEBI" id="CHEBI:59789"/>
    </ligand>
</feature>
<feature type="binding site" evidence="1">
    <location>
        <begin position="133"/>
        <end position="138"/>
    </location>
    <ligand>
        <name>S-adenosyl-L-methionine</name>
        <dbReference type="ChEBI" id="CHEBI:59789"/>
    </ligand>
</feature>
<evidence type="ECO:0000255" key="1">
    <source>
        <dbReference type="HAMAP-Rule" id="MF_00605"/>
    </source>
</evidence>
<reference key="1">
    <citation type="journal article" date="2011" name="BMC Genomics">
        <title>Complete genome sequence of the filamentous anoxygenic phototrophic bacterium Chloroflexus aurantiacus.</title>
        <authorList>
            <person name="Tang K.H."/>
            <person name="Barry K."/>
            <person name="Chertkov O."/>
            <person name="Dalin E."/>
            <person name="Han C.S."/>
            <person name="Hauser L.J."/>
            <person name="Honchak B.M."/>
            <person name="Karbach L.E."/>
            <person name="Land M.L."/>
            <person name="Lapidus A."/>
            <person name="Larimer F.W."/>
            <person name="Mikhailova N."/>
            <person name="Pitluck S."/>
            <person name="Pierson B.K."/>
            <person name="Blankenship R.E."/>
        </authorList>
    </citation>
    <scope>NUCLEOTIDE SEQUENCE [LARGE SCALE GENOMIC DNA]</scope>
    <source>
        <strain>ATCC 29366 / DSM 635 / J-10-fl</strain>
    </source>
</reference>
<name>TRMD_CHLAA</name>
<protein>
    <recommendedName>
        <fullName evidence="1">tRNA (guanine-N(1)-)-methyltransferase</fullName>
        <ecNumber evidence="1">2.1.1.228</ecNumber>
    </recommendedName>
    <alternativeName>
        <fullName evidence="1">M1G-methyltransferase</fullName>
    </alternativeName>
    <alternativeName>
        <fullName evidence="1">tRNA [GM37] methyltransferase</fullName>
    </alternativeName>
</protein>
<organism>
    <name type="scientific">Chloroflexus aurantiacus (strain ATCC 29366 / DSM 635 / J-10-fl)</name>
    <dbReference type="NCBI Taxonomy" id="324602"/>
    <lineage>
        <taxon>Bacteria</taxon>
        <taxon>Bacillati</taxon>
        <taxon>Chloroflexota</taxon>
        <taxon>Chloroflexia</taxon>
        <taxon>Chloroflexales</taxon>
        <taxon>Chloroflexineae</taxon>
        <taxon>Chloroflexaceae</taxon>
        <taxon>Chloroflexus</taxon>
    </lineage>
</organism>
<proteinExistence type="inferred from homology"/>
<keyword id="KW-0963">Cytoplasm</keyword>
<keyword id="KW-0489">Methyltransferase</keyword>
<keyword id="KW-1185">Reference proteome</keyword>
<keyword id="KW-0949">S-adenosyl-L-methionine</keyword>
<keyword id="KW-0808">Transferase</keyword>
<keyword id="KW-0819">tRNA processing</keyword>